<protein>
    <recommendedName>
        <fullName>F-box/LRR-repeat protein 21</fullName>
    </recommendedName>
    <alternativeName>
        <fullName>F-box and leucine-rich repeat protein 21</fullName>
    </alternativeName>
    <alternativeName>
        <fullName>F-box and leucine-rich repeat protein 3B</fullName>
    </alternativeName>
    <alternativeName>
        <fullName>F-box/LRR-repeat protein 3B</fullName>
    </alternativeName>
</protein>
<organism>
    <name type="scientific">Mus musculus</name>
    <name type="common">Mouse</name>
    <dbReference type="NCBI Taxonomy" id="10090"/>
    <lineage>
        <taxon>Eukaryota</taxon>
        <taxon>Metazoa</taxon>
        <taxon>Chordata</taxon>
        <taxon>Craniata</taxon>
        <taxon>Vertebrata</taxon>
        <taxon>Euteleostomi</taxon>
        <taxon>Mammalia</taxon>
        <taxon>Eutheria</taxon>
        <taxon>Euarchontoglires</taxon>
        <taxon>Glires</taxon>
        <taxon>Rodentia</taxon>
        <taxon>Myomorpha</taxon>
        <taxon>Muroidea</taxon>
        <taxon>Muridae</taxon>
        <taxon>Murinae</taxon>
        <taxon>Mus</taxon>
        <taxon>Mus</taxon>
    </lineage>
</organism>
<keyword id="KW-0025">Alternative splicing</keyword>
<keyword id="KW-0090">Biological rhythms</keyword>
<keyword id="KW-0963">Cytoplasm</keyword>
<keyword id="KW-0433">Leucine-rich repeat</keyword>
<keyword id="KW-0539">Nucleus</keyword>
<keyword id="KW-1185">Reference proteome</keyword>
<keyword id="KW-0677">Repeat</keyword>
<keyword id="KW-0833">Ubl conjugation pathway</keyword>
<feature type="chain" id="PRO_0000119874" description="F-box/LRR-repeat protein 21">
    <location>
        <begin position="1"/>
        <end position="434"/>
    </location>
</feature>
<feature type="domain" description="F-box" evidence="1">
    <location>
        <begin position="39"/>
        <end position="85"/>
    </location>
</feature>
<feature type="repeat" description="LRR 1">
    <location>
        <begin position="187"/>
        <end position="213"/>
    </location>
</feature>
<feature type="repeat" description="LRR 2">
    <location>
        <begin position="214"/>
        <end position="239"/>
    </location>
</feature>
<feature type="repeat" description="LRR 3">
    <location>
        <begin position="242"/>
        <end position="265"/>
    </location>
</feature>
<feature type="repeat" description="LRR 4">
    <location>
        <begin position="322"/>
        <end position="347"/>
    </location>
</feature>
<feature type="repeat" description="LRR 5">
    <location>
        <begin position="349"/>
        <end position="374"/>
    </location>
</feature>
<feature type="repeat" description="LRR 6">
    <location>
        <begin position="375"/>
        <end position="400"/>
    </location>
</feature>
<feature type="splice variant" id="VSP_008415" description="In isoform 2." evidence="5">
    <original>DSSTE</original>
    <variation>QSSFR</variation>
    <location>
        <begin position="124"/>
        <end position="128"/>
    </location>
</feature>
<feature type="splice variant" id="VSP_008416" description="In isoform 2." evidence="5">
    <location>
        <begin position="129"/>
        <end position="434"/>
    </location>
</feature>
<feature type="mutagenesis site" description="In Past-time (Psttm) mutant; causes period shortening due to Cry1 and Cry2 destabilization." evidence="3">
    <original>G</original>
    <variation>E</variation>
    <location>
        <position position="149"/>
    </location>
</feature>
<reference key="1">
    <citation type="journal article" date="2005" name="Science">
        <title>The transcriptional landscape of the mammalian genome.</title>
        <authorList>
            <person name="Carninci P."/>
            <person name="Kasukawa T."/>
            <person name="Katayama S."/>
            <person name="Gough J."/>
            <person name="Frith M.C."/>
            <person name="Maeda N."/>
            <person name="Oyama R."/>
            <person name="Ravasi T."/>
            <person name="Lenhard B."/>
            <person name="Wells C."/>
            <person name="Kodzius R."/>
            <person name="Shimokawa K."/>
            <person name="Bajic V.B."/>
            <person name="Brenner S.E."/>
            <person name="Batalov S."/>
            <person name="Forrest A.R."/>
            <person name="Zavolan M."/>
            <person name="Davis M.J."/>
            <person name="Wilming L.G."/>
            <person name="Aidinis V."/>
            <person name="Allen J.E."/>
            <person name="Ambesi-Impiombato A."/>
            <person name="Apweiler R."/>
            <person name="Aturaliya R.N."/>
            <person name="Bailey T.L."/>
            <person name="Bansal M."/>
            <person name="Baxter L."/>
            <person name="Beisel K.W."/>
            <person name="Bersano T."/>
            <person name="Bono H."/>
            <person name="Chalk A.M."/>
            <person name="Chiu K.P."/>
            <person name="Choudhary V."/>
            <person name="Christoffels A."/>
            <person name="Clutterbuck D.R."/>
            <person name="Crowe M.L."/>
            <person name="Dalla E."/>
            <person name="Dalrymple B.P."/>
            <person name="de Bono B."/>
            <person name="Della Gatta G."/>
            <person name="di Bernardo D."/>
            <person name="Down T."/>
            <person name="Engstrom P."/>
            <person name="Fagiolini M."/>
            <person name="Faulkner G."/>
            <person name="Fletcher C.F."/>
            <person name="Fukushima T."/>
            <person name="Furuno M."/>
            <person name="Futaki S."/>
            <person name="Gariboldi M."/>
            <person name="Georgii-Hemming P."/>
            <person name="Gingeras T.R."/>
            <person name="Gojobori T."/>
            <person name="Green R.E."/>
            <person name="Gustincich S."/>
            <person name="Harbers M."/>
            <person name="Hayashi Y."/>
            <person name="Hensch T.K."/>
            <person name="Hirokawa N."/>
            <person name="Hill D."/>
            <person name="Huminiecki L."/>
            <person name="Iacono M."/>
            <person name="Ikeo K."/>
            <person name="Iwama A."/>
            <person name="Ishikawa T."/>
            <person name="Jakt M."/>
            <person name="Kanapin A."/>
            <person name="Katoh M."/>
            <person name="Kawasawa Y."/>
            <person name="Kelso J."/>
            <person name="Kitamura H."/>
            <person name="Kitano H."/>
            <person name="Kollias G."/>
            <person name="Krishnan S.P."/>
            <person name="Kruger A."/>
            <person name="Kummerfeld S.K."/>
            <person name="Kurochkin I.V."/>
            <person name="Lareau L.F."/>
            <person name="Lazarevic D."/>
            <person name="Lipovich L."/>
            <person name="Liu J."/>
            <person name="Liuni S."/>
            <person name="McWilliam S."/>
            <person name="Madan Babu M."/>
            <person name="Madera M."/>
            <person name="Marchionni L."/>
            <person name="Matsuda H."/>
            <person name="Matsuzawa S."/>
            <person name="Miki H."/>
            <person name="Mignone F."/>
            <person name="Miyake S."/>
            <person name="Morris K."/>
            <person name="Mottagui-Tabar S."/>
            <person name="Mulder N."/>
            <person name="Nakano N."/>
            <person name="Nakauchi H."/>
            <person name="Ng P."/>
            <person name="Nilsson R."/>
            <person name="Nishiguchi S."/>
            <person name="Nishikawa S."/>
            <person name="Nori F."/>
            <person name="Ohara O."/>
            <person name="Okazaki Y."/>
            <person name="Orlando V."/>
            <person name="Pang K.C."/>
            <person name="Pavan W.J."/>
            <person name="Pavesi G."/>
            <person name="Pesole G."/>
            <person name="Petrovsky N."/>
            <person name="Piazza S."/>
            <person name="Reed J."/>
            <person name="Reid J.F."/>
            <person name="Ring B.Z."/>
            <person name="Ringwald M."/>
            <person name="Rost B."/>
            <person name="Ruan Y."/>
            <person name="Salzberg S.L."/>
            <person name="Sandelin A."/>
            <person name="Schneider C."/>
            <person name="Schoenbach C."/>
            <person name="Sekiguchi K."/>
            <person name="Semple C.A."/>
            <person name="Seno S."/>
            <person name="Sessa L."/>
            <person name="Sheng Y."/>
            <person name="Shibata Y."/>
            <person name="Shimada H."/>
            <person name="Shimada K."/>
            <person name="Silva D."/>
            <person name="Sinclair B."/>
            <person name="Sperling S."/>
            <person name="Stupka E."/>
            <person name="Sugiura K."/>
            <person name="Sultana R."/>
            <person name="Takenaka Y."/>
            <person name="Taki K."/>
            <person name="Tammoja K."/>
            <person name="Tan S.L."/>
            <person name="Tang S."/>
            <person name="Taylor M.S."/>
            <person name="Tegner J."/>
            <person name="Teichmann S.A."/>
            <person name="Ueda H.R."/>
            <person name="van Nimwegen E."/>
            <person name="Verardo R."/>
            <person name="Wei C.L."/>
            <person name="Yagi K."/>
            <person name="Yamanishi H."/>
            <person name="Zabarovsky E."/>
            <person name="Zhu S."/>
            <person name="Zimmer A."/>
            <person name="Hide W."/>
            <person name="Bult C."/>
            <person name="Grimmond S.M."/>
            <person name="Teasdale R.D."/>
            <person name="Liu E.T."/>
            <person name="Brusic V."/>
            <person name="Quackenbush J."/>
            <person name="Wahlestedt C."/>
            <person name="Mattick J.S."/>
            <person name="Hume D.A."/>
            <person name="Kai C."/>
            <person name="Sasaki D."/>
            <person name="Tomaru Y."/>
            <person name="Fukuda S."/>
            <person name="Kanamori-Katayama M."/>
            <person name="Suzuki M."/>
            <person name="Aoki J."/>
            <person name="Arakawa T."/>
            <person name="Iida J."/>
            <person name="Imamura K."/>
            <person name="Itoh M."/>
            <person name="Kato T."/>
            <person name="Kawaji H."/>
            <person name="Kawagashira N."/>
            <person name="Kawashima T."/>
            <person name="Kojima M."/>
            <person name="Kondo S."/>
            <person name="Konno H."/>
            <person name="Nakano K."/>
            <person name="Ninomiya N."/>
            <person name="Nishio T."/>
            <person name="Okada M."/>
            <person name="Plessy C."/>
            <person name="Shibata K."/>
            <person name="Shiraki T."/>
            <person name="Suzuki S."/>
            <person name="Tagami M."/>
            <person name="Waki K."/>
            <person name="Watahiki A."/>
            <person name="Okamura-Oho Y."/>
            <person name="Suzuki H."/>
            <person name="Kawai J."/>
            <person name="Hayashizaki Y."/>
        </authorList>
    </citation>
    <scope>NUCLEOTIDE SEQUENCE [LARGE SCALE MRNA] (ISOFORMS 1 AND 2)</scope>
    <source>
        <strain>C57BL/6J</strain>
        <tissue>Kidney</tissue>
        <tissue>Thymus</tissue>
        <tissue>Urinary bladder</tissue>
    </source>
</reference>
<reference key="2">
    <citation type="submission" date="2005-07" db="EMBL/GenBank/DDBJ databases">
        <authorList>
            <person name="Mural R.J."/>
            <person name="Adams M.D."/>
            <person name="Myers E.W."/>
            <person name="Smith H.O."/>
            <person name="Venter J.C."/>
        </authorList>
    </citation>
    <scope>NUCLEOTIDE SEQUENCE [LARGE SCALE GENOMIC DNA]</scope>
</reference>
<reference key="3">
    <citation type="journal article" date="2004" name="Genome Res.">
        <title>The status, quality, and expansion of the NIH full-length cDNA project: the Mammalian Gene Collection (MGC).</title>
        <authorList>
            <consortium name="The MGC Project Team"/>
        </authorList>
    </citation>
    <scope>NUCLEOTIDE SEQUENCE [LARGE SCALE MRNA]</scope>
    <source>
        <tissue>Brain</tissue>
    </source>
</reference>
<reference key="4">
    <citation type="journal article" date="2008" name="PLoS ONE">
        <title>Implication of the F-Box Protein FBXL21 in circadian pacemaker function in mammals.</title>
        <authorList>
            <person name="Dardente H."/>
            <person name="Mendoza J."/>
            <person name="Fustin J.M."/>
            <person name="Challet E."/>
            <person name="Hazlerigg D.G."/>
        </authorList>
    </citation>
    <scope>FUNCTION</scope>
    <scope>INTERACTION WITH CRY1</scope>
    <scope>TISSUE SPECIFICITY</scope>
</reference>
<reference key="5">
    <citation type="journal article" date="2013" name="Cell">
        <title>Competing E3 ubiquitin ligases govern circadian periodicity by degradation of CRY in nucleus and cytoplasm.</title>
        <authorList>
            <person name="Yoo S.H."/>
            <person name="Mohawk J.A."/>
            <person name="Siepka S.M."/>
            <person name="Shan Y."/>
            <person name="Huh S.K."/>
            <person name="Hong H.K."/>
            <person name="Kornblum I."/>
            <person name="Kumar V."/>
            <person name="Koike N."/>
            <person name="Xu M."/>
            <person name="Nussbaum J."/>
            <person name="Liu X."/>
            <person name="Chen Z."/>
            <person name="Chen Z.J."/>
            <person name="Green C.B."/>
            <person name="Takahashi J.S."/>
        </authorList>
    </citation>
    <scope>FUNCTION</scope>
    <scope>SUBCELLULAR LOCATION</scope>
    <scope>INTERACTION WITH CRY1 AND CRY2</scope>
    <scope>IDENTIFICATION IN A SCF PROTEIN LIGASE COMPLEX</scope>
    <scope>MUTAGENESIS OF GLY-149</scope>
</reference>
<reference key="6">
    <citation type="journal article" date="2013" name="Cell">
        <title>FBXL21 regulates oscillation of the circadian clock through ubiquitination and stabilization of cryptochromes.</title>
        <authorList>
            <person name="Hirano A."/>
            <person name="Yumimoto K."/>
            <person name="Tsunematsu R."/>
            <person name="Matsumoto M."/>
            <person name="Oyama M."/>
            <person name="Kozuka-Hata H."/>
            <person name="Nakagawa T."/>
            <person name="Lanjakornsiripan D."/>
            <person name="Nakayama K.I."/>
            <person name="Fukada Y."/>
        </authorList>
    </citation>
    <scope>FUNCTION</scope>
    <scope>SUBCELLULAR LOCATION</scope>
    <scope>INTERACTION WITH CRY1 AND CRY2</scope>
    <scope>IDENTIFICATION IN A SCF PROTEIN LIGASE COMPLEX</scope>
    <scope>DISRUPTION PHENOTYPE</scope>
</reference>
<name>FXL21_MOUSE</name>
<gene>
    <name type="primary">Fbxl21</name>
    <name type="synonym">Fbl21</name>
    <name type="synonym">Fbxl3b</name>
</gene>
<evidence type="ECO:0000255" key="1">
    <source>
        <dbReference type="PROSITE-ProRule" id="PRU00080"/>
    </source>
</evidence>
<evidence type="ECO:0000269" key="2">
    <source>
    </source>
</evidence>
<evidence type="ECO:0000269" key="3">
    <source>
    </source>
</evidence>
<evidence type="ECO:0000269" key="4">
    <source>
    </source>
</evidence>
<evidence type="ECO:0000303" key="5">
    <source>
    </source>
</evidence>
<evidence type="ECO:0000305" key="6"/>
<evidence type="ECO:0000305" key="7">
    <source>
    </source>
</evidence>
<evidence type="ECO:0000305" key="8">
    <source>
    </source>
</evidence>
<dbReference type="EMBL" id="AK035290">
    <property type="protein sequence ID" value="BAC29018.1"/>
    <property type="molecule type" value="mRNA"/>
</dbReference>
<dbReference type="EMBL" id="AK079800">
    <property type="protein sequence ID" value="BAC37751.1"/>
    <property type="status" value="ALT_INIT"/>
    <property type="molecule type" value="mRNA"/>
</dbReference>
<dbReference type="EMBL" id="AK085598">
    <property type="protein sequence ID" value="BAC39482.1"/>
    <property type="molecule type" value="mRNA"/>
</dbReference>
<dbReference type="EMBL" id="CH466546">
    <property type="protein sequence ID" value="EDL41240.1"/>
    <property type="molecule type" value="Genomic_DNA"/>
</dbReference>
<dbReference type="EMBL" id="BC138940">
    <property type="protein sequence ID" value="AAI38941.1"/>
    <property type="molecule type" value="mRNA"/>
</dbReference>
<dbReference type="EMBL" id="BC138941">
    <property type="protein sequence ID" value="AAI38942.1"/>
    <property type="molecule type" value="mRNA"/>
</dbReference>
<dbReference type="CCDS" id="CCDS26563.1">
    <molecule id="Q8BFZ4-1"/>
</dbReference>
<dbReference type="RefSeq" id="NP_001333661.1">
    <property type="nucleotide sequence ID" value="NM_001346732.1"/>
</dbReference>
<dbReference type="RefSeq" id="NP_848789.2">
    <molecule id="Q8BFZ4-1"/>
    <property type="nucleotide sequence ID" value="NM_178674.5"/>
</dbReference>
<dbReference type="SMR" id="Q8BFZ4"/>
<dbReference type="BioGRID" id="229415">
    <property type="interactions" value="4"/>
</dbReference>
<dbReference type="FunCoup" id="Q8BFZ4">
    <property type="interactions" value="55"/>
</dbReference>
<dbReference type="IntAct" id="Q8BFZ4">
    <property type="interactions" value="7"/>
</dbReference>
<dbReference type="STRING" id="10090.ENSMUSP00000112518"/>
<dbReference type="iPTMnet" id="Q8BFZ4"/>
<dbReference type="PhosphoSitePlus" id="Q8BFZ4"/>
<dbReference type="PaxDb" id="10090-ENSMUSP00000112518"/>
<dbReference type="ProteomicsDB" id="271616">
    <molecule id="Q8BFZ4-1"/>
</dbReference>
<dbReference type="DNASU" id="213311"/>
<dbReference type="Ensembl" id="ENSMUST00000045428.7">
    <molecule id="Q8BFZ4-1"/>
    <property type="protein sequence ID" value="ENSMUSP00000035248.7"/>
    <property type="gene ID" value="ENSMUSG00000035509.18"/>
</dbReference>
<dbReference type="GeneID" id="213311"/>
<dbReference type="KEGG" id="mmu:213311"/>
<dbReference type="UCSC" id="uc007qsp.1">
    <molecule id="Q8BFZ4-2"/>
    <property type="organism name" value="mouse"/>
</dbReference>
<dbReference type="UCSC" id="uc007qsr.1">
    <molecule id="Q8BFZ4-1"/>
    <property type="organism name" value="mouse"/>
</dbReference>
<dbReference type="AGR" id="MGI:2442921"/>
<dbReference type="CTD" id="213311"/>
<dbReference type="MGI" id="MGI:2442921">
    <property type="gene designation" value="Fbxl21"/>
</dbReference>
<dbReference type="VEuPathDB" id="HostDB:ENSMUSG00000035509"/>
<dbReference type="eggNOG" id="KOG1947">
    <property type="taxonomic scope" value="Eukaryota"/>
</dbReference>
<dbReference type="GeneTree" id="ENSGT00940000159491"/>
<dbReference type="HOGENOM" id="CLU_033637_0_0_1"/>
<dbReference type="InParanoid" id="Q8BFZ4"/>
<dbReference type="OMA" id="LWFPDMM"/>
<dbReference type="OrthoDB" id="9974792at2759"/>
<dbReference type="PhylomeDB" id="Q8BFZ4"/>
<dbReference type="Reactome" id="R-MMU-8951664">
    <property type="pathway name" value="Neddylation"/>
</dbReference>
<dbReference type="Reactome" id="R-MMU-983168">
    <property type="pathway name" value="Antigen processing: Ubiquitination &amp; Proteasome degradation"/>
</dbReference>
<dbReference type="UniPathway" id="UPA00143"/>
<dbReference type="BioGRID-ORCS" id="213311">
    <property type="hits" value="5 hits in 78 CRISPR screens"/>
</dbReference>
<dbReference type="PRO" id="PR:Q8BFZ4"/>
<dbReference type="Proteomes" id="UP000000589">
    <property type="component" value="Chromosome 13"/>
</dbReference>
<dbReference type="RNAct" id="Q8BFZ4">
    <property type="molecule type" value="protein"/>
</dbReference>
<dbReference type="Bgee" id="ENSMUSG00000035509">
    <property type="expression patterns" value="Expressed in cortical plate and 57 other cell types or tissues"/>
</dbReference>
<dbReference type="ExpressionAtlas" id="Q8BFZ4">
    <property type="expression patterns" value="baseline and differential"/>
</dbReference>
<dbReference type="GO" id="GO:0005829">
    <property type="term" value="C:cytosol"/>
    <property type="evidence" value="ECO:0000314"/>
    <property type="project" value="UniProtKB"/>
</dbReference>
<dbReference type="GO" id="GO:0005634">
    <property type="term" value="C:nucleus"/>
    <property type="evidence" value="ECO:0000314"/>
    <property type="project" value="UniProtKB"/>
</dbReference>
<dbReference type="GO" id="GO:0019005">
    <property type="term" value="C:SCF ubiquitin ligase complex"/>
    <property type="evidence" value="ECO:0000314"/>
    <property type="project" value="UniProtKB"/>
</dbReference>
<dbReference type="GO" id="GO:0043153">
    <property type="term" value="P:entrainment of circadian clock by photoperiod"/>
    <property type="evidence" value="ECO:0000315"/>
    <property type="project" value="UniProtKB"/>
</dbReference>
<dbReference type="GO" id="GO:0016567">
    <property type="term" value="P:protein ubiquitination"/>
    <property type="evidence" value="ECO:0000314"/>
    <property type="project" value="UniProtKB"/>
</dbReference>
<dbReference type="GO" id="GO:0048511">
    <property type="term" value="P:rhythmic process"/>
    <property type="evidence" value="ECO:0007669"/>
    <property type="project" value="UniProtKB-KW"/>
</dbReference>
<dbReference type="CDD" id="cd22179">
    <property type="entry name" value="F-box_FBXL21"/>
    <property type="match status" value="1"/>
</dbReference>
<dbReference type="CDD" id="cd23956">
    <property type="entry name" value="FBXL21_LRR"/>
    <property type="match status" value="1"/>
</dbReference>
<dbReference type="FunFam" id="1.20.1280.50:FF:000005">
    <property type="entry name" value="F-box/LRR-repeat protein 3 isoform X1"/>
    <property type="match status" value="1"/>
</dbReference>
<dbReference type="FunFam" id="3.80.10.10:FF:000010">
    <property type="entry name" value="F-box/LRR-repeat protein 3 isoform X1"/>
    <property type="match status" value="1"/>
</dbReference>
<dbReference type="Gene3D" id="1.20.1280.50">
    <property type="match status" value="1"/>
</dbReference>
<dbReference type="Gene3D" id="3.80.10.10">
    <property type="entry name" value="Ribonuclease Inhibitor"/>
    <property type="match status" value="1"/>
</dbReference>
<dbReference type="InterPro" id="IPR036047">
    <property type="entry name" value="F-box-like_dom_sf"/>
</dbReference>
<dbReference type="InterPro" id="IPR001810">
    <property type="entry name" value="F-box_dom"/>
</dbReference>
<dbReference type="InterPro" id="IPR032675">
    <property type="entry name" value="LRR_dom_sf"/>
</dbReference>
<dbReference type="PANTHER" id="PTHR16134">
    <property type="entry name" value="F-BOX/TPR REPEAT PROTEIN POF3"/>
    <property type="match status" value="1"/>
</dbReference>
<dbReference type="PANTHER" id="PTHR16134:SF2">
    <property type="entry name" value="F-BOX_LRR-REPEAT PROTEIN 21-RELATED"/>
    <property type="match status" value="1"/>
</dbReference>
<dbReference type="Pfam" id="PF12937">
    <property type="entry name" value="F-box-like"/>
    <property type="match status" value="1"/>
</dbReference>
<dbReference type="SMART" id="SM00256">
    <property type="entry name" value="FBOX"/>
    <property type="match status" value="1"/>
</dbReference>
<dbReference type="SUPFAM" id="SSF81383">
    <property type="entry name" value="F-box domain"/>
    <property type="match status" value="1"/>
</dbReference>
<dbReference type="SUPFAM" id="SSF52047">
    <property type="entry name" value="RNI-like"/>
    <property type="match status" value="1"/>
</dbReference>
<dbReference type="PROSITE" id="PS50181">
    <property type="entry name" value="FBOX"/>
    <property type="match status" value="1"/>
</dbReference>
<proteinExistence type="evidence at protein level"/>
<sequence length="434" mass="49154">MKRNNFSAVNKVVQSSPVVKQPKRGLCSSLRQTHALSVLLDWGTLPHHVILQIFQYLPLIDRARASSVCRRWNEVFHIPDLWRKFEFELNQSATSYFKSTHPDLIQQIIKKHAAHLQYVSFKVDSSTESAEAACDILSQLVNCSIQTLGLISTAKPSFMNVPKSHFVSALTVVFVNSKSLSSIKIEDTPVDDPSLKILVANNSDTLRLLKMSSCPHVSSDGILCVADHCQGLRELALNYYILSDEILLALSSETHVNLEHLRIDVVSENPGQIKFHSIKKRSWDALIKHSPRVNVVMYFFLYEEEFEAFFKEETPVTHLYFGRSVSRAILGRIGLNCPRLIELVVCANGLLPLDSELIRIAKHCKNLTSLGLSECEVSCSAFVEFVRLCGRRLTQLSIMEEVLVPDDRYTPDEVHTEVSKHLGRVWFPDVMPIW</sequence>
<accession>Q8BFZ4</accession>
<accession>B2RSN8</accession>
<accession>Q8BIJ8</accession>
<accession>Q8BIW5</accession>
<comment type="function">
    <text evidence="2 3 4">Substrate-recognition component of the SCF(FBXL21) E3 ubiquitin ligase complex involved in circadian rhythm function. Plays a key role in the maintenance of both the speed and the robustness of the circadian clock oscillation. The SCF(FBXL21) complex mainly acts in the cytosol and mediates ubiquitination of CRY proteins (CRY1 and CRY2), leading to CRY proteins stabilization. The SCF(FBXL21) complex counteracts the activity of the SCF(FBXL3) complex and protects CRY proteins from degradation. Involved in the hypothalamic suprachiasmatic nucleus (SCN) clock regulating temporal organization of the daily activities.</text>
</comment>
<comment type="pathway">
    <text>Protein modification; protein ubiquitination.</text>
</comment>
<comment type="subunit">
    <text evidence="2 3 4">Part of the SCF (SKP1-CUL1-F-box) E3 ubiquitin-protein ligase complex SCF(FBXL21) composed of CUL1, SKP1, RBX1 and FBXL21. Interacts with CRY1 and CRY2.</text>
</comment>
<comment type="interaction">
    <interactant intactId="EBI-6898235">
        <id>Q8BFZ4</id>
    </interactant>
    <interactant intactId="EBI-1266607">
        <id>P97784</id>
        <label>Cry1</label>
    </interactant>
    <organismsDiffer>false</organismsDiffer>
    <experiments>10</experiments>
</comment>
<comment type="interaction">
    <interactant intactId="EBI-6898235">
        <id>Q8BFZ4</id>
    </interactant>
    <interactant intactId="EBI-1266619">
        <id>Q9R194</id>
        <label>Cry2</label>
    </interactant>
    <organismsDiffer>false</organismsDiffer>
    <experiments>4</experiments>
</comment>
<comment type="interaction">
    <interactant intactId="EBI-6898235">
        <id>Q8BFZ4</id>
    </interactant>
    <interactant intactId="EBI-359390">
        <id>Q13616</id>
        <label>CUL1</label>
    </interactant>
    <organismsDiffer>true</organismsDiffer>
    <experiments>3</experiments>
</comment>
<comment type="interaction">
    <interactant intactId="EBI-6898235">
        <id>Q8BFZ4</id>
    </interactant>
    <interactant intactId="EBI-307486">
        <id>P63208</id>
        <label>SKP1</label>
    </interactant>
    <organismsDiffer>true</organismsDiffer>
    <experiments>3</experiments>
</comment>
<comment type="subcellular location">
    <subcellularLocation>
        <location>Cytoplasm</location>
        <location>Cytosol</location>
    </subcellularLocation>
    <subcellularLocation>
        <location>Nucleus</location>
    </subcellularLocation>
    <text>Mainly localizes in the cytosol. Present at low level in the nucleus.</text>
</comment>
<comment type="alternative products">
    <event type="alternative splicing"/>
    <isoform>
        <id>Q8BFZ4-1</id>
        <name>1</name>
        <sequence type="displayed"/>
    </isoform>
    <isoform>
        <id>Q8BFZ4-2</id>
        <name>2</name>
        <sequence type="described" ref="VSP_008415 VSP_008416"/>
    </isoform>
</comment>
<comment type="tissue specificity">
    <text evidence="2">Expressed in the hypothalamus, especially in the suprachiasmatic nucleus (SCN). Expression is driven by the core-clock. There is a pronounced diurnal and circadian expression rhythms rising rapidly at the start of the day and declining at the onset of the night.</text>
</comment>
<comment type="disruption phenotype">
    <text evidence="4">Mice show normal periodicity of wheel-running rhythms with compromised organization of daily activities: mice do not display significant difference from their wild-type littermates in both the free-running period in constant darkness (DD) and activity onset in 12 hours of light/12 hours of darkness (LD). However, an alteration in the daily activities is observed: while wild-type mice show 2 peaks of activity during the active period, the late night activity is eliminated in Fbxl21-deficient mice. Mice lacking both Fbxl3 and Fbxl21 show an attenuated phenotype in behavioral rhythm compared to Fbxl3-deficient mice; however, they exhibit unstable behavioral rhythms, sometimes eliciting arrhythmicity.</text>
</comment>
<comment type="caution">
    <text evidence="7 8">The mechanism by which the SCF(FBXL21) complex stabilizes CRY proteins (CRY1 and CRY2) is still unclear: according to a report, the SCF(FBXL21) complex does not catalyze 'Lys-48'-linked polyubiquitin chains, but catalyzes a different type of ubiquitin chains that do not lead to degradation (PubMed:23452856). According to a second report, FBXL21 has a higher affinity for CRY proteins compared to FBXL3, while the SCF(FBXL21) complex has weaker ubiquitin-ligase activity compared to the SCF(FBXL3) complex: as a consequence, the SCF(FBXL21) complex protects CRY proteins from SCF(FBXL3) activity and degradation in the nucleus, while it promotes slow degradation of CRY proteins in the cytosol (PubMed:23452855).</text>
</comment>
<comment type="sequence caution" evidence="6">
    <conflict type="erroneous initiation">
        <sequence resource="EMBL-CDS" id="BAC37751"/>
    </conflict>
    <text>Truncated N-terminus.</text>
</comment>